<organism>
    <name type="scientific">Psychrobacter cryohalolentis (strain ATCC BAA-1226 / DSM 17306 / VKM B-2378 / K5)</name>
    <dbReference type="NCBI Taxonomy" id="335284"/>
    <lineage>
        <taxon>Bacteria</taxon>
        <taxon>Pseudomonadati</taxon>
        <taxon>Pseudomonadota</taxon>
        <taxon>Gammaproteobacteria</taxon>
        <taxon>Moraxellales</taxon>
        <taxon>Moraxellaceae</taxon>
        <taxon>Psychrobacter</taxon>
    </lineage>
</organism>
<reference key="1">
    <citation type="submission" date="2006-03" db="EMBL/GenBank/DDBJ databases">
        <title>Complete sequence of chromosome of Psychrobacter cryohalolentis K5.</title>
        <authorList>
            <consortium name="US DOE Joint Genome Institute"/>
            <person name="Copeland A."/>
            <person name="Lucas S."/>
            <person name="Lapidus A."/>
            <person name="Barry K."/>
            <person name="Detter J.C."/>
            <person name="Glavina T."/>
            <person name="Hammon N."/>
            <person name="Israni S."/>
            <person name="Dalin E."/>
            <person name="Tice H."/>
            <person name="Pitluck S."/>
            <person name="Brettin T."/>
            <person name="Bruce D."/>
            <person name="Han C."/>
            <person name="Tapia R."/>
            <person name="Sims D.R."/>
            <person name="Gilna P."/>
            <person name="Schmutz J."/>
            <person name="Larimer F."/>
            <person name="Land M."/>
            <person name="Hauser L."/>
            <person name="Kyrpides N."/>
            <person name="Kim E."/>
            <person name="Richardson P."/>
        </authorList>
    </citation>
    <scope>NUCLEOTIDE SEQUENCE [LARGE SCALE GENOMIC DNA]</scope>
    <source>
        <strain>ATCC BAA-1226 / DSM 17306 / VKM B-2378 / K5</strain>
    </source>
</reference>
<gene>
    <name evidence="1" type="primary">aat</name>
    <name type="ordered locus">Pcryo_0428</name>
</gene>
<accession>Q1QDP2</accession>
<protein>
    <recommendedName>
        <fullName evidence="1">Leucyl/phenylalanyl-tRNA--protein transferase</fullName>
        <ecNumber evidence="1">2.3.2.6</ecNumber>
    </recommendedName>
    <alternativeName>
        <fullName evidence="1">L/F-transferase</fullName>
    </alternativeName>
    <alternativeName>
        <fullName evidence="1">Leucyltransferase</fullName>
    </alternativeName>
    <alternativeName>
        <fullName evidence="1">Phenyalanyltransferase</fullName>
    </alternativeName>
</protein>
<name>LFTR_PSYCK</name>
<evidence type="ECO:0000255" key="1">
    <source>
        <dbReference type="HAMAP-Rule" id="MF_00688"/>
    </source>
</evidence>
<comment type="function">
    <text evidence="1">Functions in the N-end rule pathway of protein degradation where it conjugates Leu, Phe and, less efficiently, Met from aminoacyl-tRNAs to the N-termini of proteins containing an N-terminal arginine or lysine.</text>
</comment>
<comment type="catalytic activity">
    <reaction evidence="1">
        <text>N-terminal L-lysyl-[protein] + L-leucyl-tRNA(Leu) = N-terminal L-leucyl-L-lysyl-[protein] + tRNA(Leu) + H(+)</text>
        <dbReference type="Rhea" id="RHEA:12340"/>
        <dbReference type="Rhea" id="RHEA-COMP:9613"/>
        <dbReference type="Rhea" id="RHEA-COMP:9622"/>
        <dbReference type="Rhea" id="RHEA-COMP:12670"/>
        <dbReference type="Rhea" id="RHEA-COMP:12671"/>
        <dbReference type="ChEBI" id="CHEBI:15378"/>
        <dbReference type="ChEBI" id="CHEBI:65249"/>
        <dbReference type="ChEBI" id="CHEBI:78442"/>
        <dbReference type="ChEBI" id="CHEBI:78494"/>
        <dbReference type="ChEBI" id="CHEBI:133043"/>
        <dbReference type="EC" id="2.3.2.6"/>
    </reaction>
</comment>
<comment type="catalytic activity">
    <reaction evidence="1">
        <text>N-terminal L-arginyl-[protein] + L-leucyl-tRNA(Leu) = N-terminal L-leucyl-L-arginyl-[protein] + tRNA(Leu) + H(+)</text>
        <dbReference type="Rhea" id="RHEA:50416"/>
        <dbReference type="Rhea" id="RHEA-COMP:9613"/>
        <dbReference type="Rhea" id="RHEA-COMP:9622"/>
        <dbReference type="Rhea" id="RHEA-COMP:12672"/>
        <dbReference type="Rhea" id="RHEA-COMP:12673"/>
        <dbReference type="ChEBI" id="CHEBI:15378"/>
        <dbReference type="ChEBI" id="CHEBI:64719"/>
        <dbReference type="ChEBI" id="CHEBI:78442"/>
        <dbReference type="ChEBI" id="CHEBI:78494"/>
        <dbReference type="ChEBI" id="CHEBI:133044"/>
        <dbReference type="EC" id="2.3.2.6"/>
    </reaction>
</comment>
<comment type="catalytic activity">
    <reaction evidence="1">
        <text>L-phenylalanyl-tRNA(Phe) + an N-terminal L-alpha-aminoacyl-[protein] = an N-terminal L-phenylalanyl-L-alpha-aminoacyl-[protein] + tRNA(Phe)</text>
        <dbReference type="Rhea" id="RHEA:43632"/>
        <dbReference type="Rhea" id="RHEA-COMP:9668"/>
        <dbReference type="Rhea" id="RHEA-COMP:9699"/>
        <dbReference type="Rhea" id="RHEA-COMP:10636"/>
        <dbReference type="Rhea" id="RHEA-COMP:10637"/>
        <dbReference type="ChEBI" id="CHEBI:78442"/>
        <dbReference type="ChEBI" id="CHEBI:78531"/>
        <dbReference type="ChEBI" id="CHEBI:78597"/>
        <dbReference type="ChEBI" id="CHEBI:83561"/>
        <dbReference type="EC" id="2.3.2.6"/>
    </reaction>
</comment>
<comment type="subcellular location">
    <subcellularLocation>
        <location evidence="1">Cytoplasm</location>
    </subcellularLocation>
</comment>
<comment type="similarity">
    <text evidence="1">Belongs to the L/F-transferase family.</text>
</comment>
<sequence length="274" mass="30622">MSDFVNDGHTTPEAFVQHIKSLGRYDFPEPAIVDPEGMGIVAIGGDLAPETLISAYAQGLFPWFNDDEPIAWWCPEPRCVMQPTDYQPSKSLRKLANRSRWQLTLNQAFDEVIHACSLPRSNGVNNDLNESQPVGEHTWIHDEMIEAYTELHAQGFAHSIEVWDDKGALVGGLYGLKIGGIYFGESMFHIASNASKLAFWGLMRLCEHSNVNLVDCQLPNDHLMSLGAITLSRTEFLTQLDILISNSSDNWHKNSHKPLAVPLLGSLQPWQLNL</sequence>
<keyword id="KW-0012">Acyltransferase</keyword>
<keyword id="KW-0963">Cytoplasm</keyword>
<keyword id="KW-0808">Transferase</keyword>
<proteinExistence type="inferred from homology"/>
<dbReference type="EC" id="2.3.2.6" evidence="1"/>
<dbReference type="EMBL" id="CP000323">
    <property type="protein sequence ID" value="ABE74211.1"/>
    <property type="molecule type" value="Genomic_DNA"/>
</dbReference>
<dbReference type="RefSeq" id="WP_011512796.1">
    <property type="nucleotide sequence ID" value="NC_007969.1"/>
</dbReference>
<dbReference type="SMR" id="Q1QDP2"/>
<dbReference type="STRING" id="335284.Pcryo_0428"/>
<dbReference type="KEGG" id="pcr:Pcryo_0428"/>
<dbReference type="eggNOG" id="COG2360">
    <property type="taxonomic scope" value="Bacteria"/>
</dbReference>
<dbReference type="HOGENOM" id="CLU_075045_0_0_6"/>
<dbReference type="Proteomes" id="UP000002425">
    <property type="component" value="Chromosome"/>
</dbReference>
<dbReference type="GO" id="GO:0005737">
    <property type="term" value="C:cytoplasm"/>
    <property type="evidence" value="ECO:0007669"/>
    <property type="project" value="UniProtKB-SubCell"/>
</dbReference>
<dbReference type="GO" id="GO:0008914">
    <property type="term" value="F:leucyl-tRNA--protein transferase activity"/>
    <property type="evidence" value="ECO:0007669"/>
    <property type="project" value="UniProtKB-UniRule"/>
</dbReference>
<dbReference type="GO" id="GO:0030163">
    <property type="term" value="P:protein catabolic process"/>
    <property type="evidence" value="ECO:0007669"/>
    <property type="project" value="UniProtKB-UniRule"/>
</dbReference>
<dbReference type="Gene3D" id="3.40.630.70">
    <property type="entry name" value="Leucyl/phenylalanyl-tRNA-protein transferase, C-terminal domain"/>
    <property type="match status" value="1"/>
</dbReference>
<dbReference type="Gene3D" id="3.30.70.3550">
    <property type="entry name" value="Leucyl/phenylalanyl-tRNA-protein transferase, N-terminal domain"/>
    <property type="match status" value="1"/>
</dbReference>
<dbReference type="HAMAP" id="MF_00688">
    <property type="entry name" value="Leu_Phe_trans"/>
    <property type="match status" value="1"/>
</dbReference>
<dbReference type="InterPro" id="IPR016181">
    <property type="entry name" value="Acyl_CoA_acyltransferase"/>
</dbReference>
<dbReference type="InterPro" id="IPR004616">
    <property type="entry name" value="Leu/Phe-tRNA_Trfase"/>
</dbReference>
<dbReference type="InterPro" id="IPR042203">
    <property type="entry name" value="Leu/Phe-tRNA_Trfase_C"/>
</dbReference>
<dbReference type="InterPro" id="IPR042221">
    <property type="entry name" value="Leu/Phe-tRNA_Trfase_N"/>
</dbReference>
<dbReference type="NCBIfam" id="TIGR00667">
    <property type="entry name" value="aat"/>
    <property type="match status" value="1"/>
</dbReference>
<dbReference type="PANTHER" id="PTHR30098">
    <property type="entry name" value="LEUCYL/PHENYLALANYL-TRNA--PROTEIN TRANSFERASE"/>
    <property type="match status" value="1"/>
</dbReference>
<dbReference type="PANTHER" id="PTHR30098:SF2">
    <property type="entry name" value="LEUCYL_PHENYLALANYL-TRNA--PROTEIN TRANSFERASE"/>
    <property type="match status" value="1"/>
</dbReference>
<dbReference type="Pfam" id="PF03588">
    <property type="entry name" value="Leu_Phe_trans"/>
    <property type="match status" value="1"/>
</dbReference>
<dbReference type="SUPFAM" id="SSF55729">
    <property type="entry name" value="Acyl-CoA N-acyltransferases (Nat)"/>
    <property type="match status" value="1"/>
</dbReference>
<feature type="chain" id="PRO_0000258082" description="Leucyl/phenylalanyl-tRNA--protein transferase">
    <location>
        <begin position="1"/>
        <end position="274"/>
    </location>
</feature>